<proteinExistence type="evidence at protein level"/>
<gene>
    <name type="primary">CYP2J1</name>
</gene>
<feature type="chain" id="PRO_0000051768" description="Cytochrome P450 2J1">
    <location>
        <begin position="1"/>
        <end position="501"/>
    </location>
</feature>
<feature type="binding site" description="axial binding residue" evidence="1">
    <location>
        <position position="447"/>
    </location>
    <ligand>
        <name>heme</name>
        <dbReference type="ChEBI" id="CHEBI:30413"/>
    </ligand>
    <ligandPart>
        <name>Fe</name>
        <dbReference type="ChEBI" id="CHEBI:18248"/>
    </ligandPart>
</feature>
<name>CP2J1_RABIT</name>
<reference key="1">
    <citation type="journal article" date="1991" name="J. Biol. Chem.">
        <title>A novel species of cytochrome P-450 (P-450ib) specific for the small intestine of rabbits. cDNA cloning and its expression in COS cells.</title>
        <authorList>
            <person name="Kikuta Y."/>
            <person name="Sogawa K."/>
            <person name="Haniu M."/>
            <person name="Kinosaki M."/>
            <person name="Kusunose E."/>
            <person name="Nojima Y."/>
            <person name="Yamamoto S."/>
            <person name="Ichihara K."/>
            <person name="Kusunose M."/>
            <person name="Fujii-Kuriyama Y."/>
        </authorList>
    </citation>
    <scope>NUCLEOTIDE SEQUENCE [MRNA]</scope>
    <scope>PARTIAL PROTEIN SEQUENCE</scope>
</reference>
<keyword id="KW-0903">Direct protein sequencing</keyword>
<keyword id="KW-0256">Endoplasmic reticulum</keyword>
<keyword id="KW-0349">Heme</keyword>
<keyword id="KW-0408">Iron</keyword>
<keyword id="KW-0472">Membrane</keyword>
<keyword id="KW-0479">Metal-binding</keyword>
<keyword id="KW-0492">Microsome</keyword>
<keyword id="KW-0503">Monooxygenase</keyword>
<keyword id="KW-0560">Oxidoreductase</keyword>
<keyword id="KW-1185">Reference proteome</keyword>
<comment type="function">
    <text>Catalyzes the N-demethylation of benzphetamine to formaldehyde.</text>
</comment>
<comment type="catalytic activity">
    <reaction>
        <text>an organic molecule + reduced [NADPH--hemoprotein reductase] + O2 = an alcohol + oxidized [NADPH--hemoprotein reductase] + H2O + H(+)</text>
        <dbReference type="Rhea" id="RHEA:17149"/>
        <dbReference type="Rhea" id="RHEA-COMP:11964"/>
        <dbReference type="Rhea" id="RHEA-COMP:11965"/>
        <dbReference type="ChEBI" id="CHEBI:15377"/>
        <dbReference type="ChEBI" id="CHEBI:15378"/>
        <dbReference type="ChEBI" id="CHEBI:15379"/>
        <dbReference type="ChEBI" id="CHEBI:30879"/>
        <dbReference type="ChEBI" id="CHEBI:57618"/>
        <dbReference type="ChEBI" id="CHEBI:58210"/>
        <dbReference type="ChEBI" id="CHEBI:142491"/>
        <dbReference type="EC" id="1.14.14.1"/>
    </reaction>
</comment>
<comment type="cofactor">
    <cofactor evidence="1">
        <name>heme</name>
        <dbReference type="ChEBI" id="CHEBI:30413"/>
    </cofactor>
</comment>
<comment type="subcellular location">
    <subcellularLocation>
        <location>Endoplasmic reticulum membrane</location>
        <topology>Peripheral membrane protein</topology>
    </subcellularLocation>
    <subcellularLocation>
        <location>Microsome membrane</location>
        <topology>Peripheral membrane protein</topology>
    </subcellularLocation>
</comment>
<comment type="tissue specificity">
    <text>Small intestine.</text>
</comment>
<comment type="similarity">
    <text evidence="2">Belongs to the cytochrome P450 family.</text>
</comment>
<dbReference type="EC" id="1.14.14.1"/>
<dbReference type="EMBL" id="D90405">
    <property type="protein sequence ID" value="BAA14401.1"/>
    <property type="molecule type" value="mRNA"/>
</dbReference>
<dbReference type="PIR" id="A40938">
    <property type="entry name" value="A40938"/>
</dbReference>
<dbReference type="RefSeq" id="NP_001153760.1">
    <property type="nucleotide sequence ID" value="NM_001160288.1"/>
</dbReference>
<dbReference type="SMR" id="P52786"/>
<dbReference type="FunCoup" id="P52786">
    <property type="interactions" value="783"/>
</dbReference>
<dbReference type="STRING" id="9986.ENSOCUP00000029415"/>
<dbReference type="PaxDb" id="9986-ENSOCUP00000003635"/>
<dbReference type="GeneID" id="100301544"/>
<dbReference type="KEGG" id="ocu:100301544"/>
<dbReference type="CTD" id="1573"/>
<dbReference type="eggNOG" id="KOG0156">
    <property type="taxonomic scope" value="Eukaryota"/>
</dbReference>
<dbReference type="InParanoid" id="P52786"/>
<dbReference type="OrthoDB" id="2789670at2759"/>
<dbReference type="Proteomes" id="UP000001811">
    <property type="component" value="Unplaced"/>
</dbReference>
<dbReference type="GO" id="GO:0005789">
    <property type="term" value="C:endoplasmic reticulum membrane"/>
    <property type="evidence" value="ECO:0007669"/>
    <property type="project" value="UniProtKB-SubCell"/>
</dbReference>
<dbReference type="GO" id="GO:0020037">
    <property type="term" value="F:heme binding"/>
    <property type="evidence" value="ECO:0007669"/>
    <property type="project" value="InterPro"/>
</dbReference>
<dbReference type="GO" id="GO:0005506">
    <property type="term" value="F:iron ion binding"/>
    <property type="evidence" value="ECO:0007669"/>
    <property type="project" value="InterPro"/>
</dbReference>
<dbReference type="GO" id="GO:0016712">
    <property type="term" value="F:oxidoreductase activity, acting on paired donors, with incorporation or reduction of molecular oxygen, reduced flavin or flavoprotein as one donor, and incorporation of one atom of oxygen"/>
    <property type="evidence" value="ECO:0007669"/>
    <property type="project" value="UniProtKB-EC"/>
</dbReference>
<dbReference type="GO" id="GO:0006082">
    <property type="term" value="P:organic acid metabolic process"/>
    <property type="evidence" value="ECO:0007669"/>
    <property type="project" value="TreeGrafter"/>
</dbReference>
<dbReference type="GO" id="GO:0006805">
    <property type="term" value="P:xenobiotic metabolic process"/>
    <property type="evidence" value="ECO:0007669"/>
    <property type="project" value="TreeGrafter"/>
</dbReference>
<dbReference type="CDD" id="cd20662">
    <property type="entry name" value="CYP2J"/>
    <property type="match status" value="1"/>
</dbReference>
<dbReference type="FunFam" id="1.10.630.10:FF:000004">
    <property type="entry name" value="cytochrome P450 2D15 isoform X1"/>
    <property type="match status" value="1"/>
</dbReference>
<dbReference type="Gene3D" id="1.10.630.10">
    <property type="entry name" value="Cytochrome P450"/>
    <property type="match status" value="1"/>
</dbReference>
<dbReference type="InterPro" id="IPR001128">
    <property type="entry name" value="Cyt_P450"/>
</dbReference>
<dbReference type="InterPro" id="IPR017972">
    <property type="entry name" value="Cyt_P450_CS"/>
</dbReference>
<dbReference type="InterPro" id="IPR002401">
    <property type="entry name" value="Cyt_P450_E_grp-I"/>
</dbReference>
<dbReference type="InterPro" id="IPR008071">
    <property type="entry name" value="Cyt_P450_E_grp-I_CYP2J-like"/>
</dbReference>
<dbReference type="InterPro" id="IPR036396">
    <property type="entry name" value="Cyt_P450_sf"/>
</dbReference>
<dbReference type="InterPro" id="IPR050182">
    <property type="entry name" value="Cytochrome_P450_fam2"/>
</dbReference>
<dbReference type="PANTHER" id="PTHR24300:SF177">
    <property type="entry name" value="CYTOCHROME P450 2J2"/>
    <property type="match status" value="1"/>
</dbReference>
<dbReference type="PANTHER" id="PTHR24300">
    <property type="entry name" value="CYTOCHROME P450 508A4-RELATED"/>
    <property type="match status" value="1"/>
</dbReference>
<dbReference type="Pfam" id="PF00067">
    <property type="entry name" value="p450"/>
    <property type="match status" value="1"/>
</dbReference>
<dbReference type="PRINTS" id="PR00463">
    <property type="entry name" value="EP450I"/>
</dbReference>
<dbReference type="PRINTS" id="PR01688">
    <property type="entry name" value="EP450ICYP2J"/>
</dbReference>
<dbReference type="PRINTS" id="PR00385">
    <property type="entry name" value="P450"/>
</dbReference>
<dbReference type="SUPFAM" id="SSF48264">
    <property type="entry name" value="Cytochrome P450"/>
    <property type="match status" value="1"/>
</dbReference>
<dbReference type="PROSITE" id="PS00086">
    <property type="entry name" value="CYTOCHROME_P450"/>
    <property type="match status" value="1"/>
</dbReference>
<protein>
    <recommendedName>
        <fullName>Cytochrome P450 2J1</fullName>
        <ecNumber>1.14.14.1</ecNumber>
    </recommendedName>
    <alternativeName>
        <fullName>CYPIIJ1</fullName>
    </alternativeName>
    <alternativeName>
        <fullName>Cytochrome P-450IB</fullName>
    </alternativeName>
</protein>
<organism>
    <name type="scientific">Oryctolagus cuniculus</name>
    <name type="common">Rabbit</name>
    <dbReference type="NCBI Taxonomy" id="9986"/>
    <lineage>
        <taxon>Eukaryota</taxon>
        <taxon>Metazoa</taxon>
        <taxon>Chordata</taxon>
        <taxon>Craniata</taxon>
        <taxon>Vertebrata</taxon>
        <taxon>Euteleostomi</taxon>
        <taxon>Mammalia</taxon>
        <taxon>Eutheria</taxon>
        <taxon>Euarchontoglires</taxon>
        <taxon>Glires</taxon>
        <taxon>Lagomorpha</taxon>
        <taxon>Leporidae</taxon>
        <taxon>Oryctolagus</taxon>
    </lineage>
</organism>
<sequence>MVAALSSLAAALGAGLHPKTLLLGAVAFLFFAYFLKTRRPKNYPPGPWRLPFLGNLFTLDMEKSHLQLQQFVKKYGNLFCLDLAGKSIVIVTGLPLIKEVLVHMDQNFINRPVPPIRERSFKKNGLIMSSGQLWKEQRRFALMTLRNFGLGKKSLEERIQEEARHLTEAMEKEGGQPFDAHFKINNAVSNIICSITFGERFEYHDGQFQELLKLFDEVMYLEASMLCQLYNIFPWIMKFLPGAHQTLFSNWKKLELFVSRMLENHKKDWNPAETRDFIDAYLKEMSKYPGSATSSFNEENLICSTLDLFLAGTETTSDMRWGLLFMALYPEIQEKVHAEIDSVIGQWQQPSMASRESLPYTNAVIHEVQRMGNILPLNVPREVTVDTTLAGYHLPKGTVVLTNLTALHKDPEEWATPDTFNPEHFLENGQFKKKEAFIPFSIGKRACLGEQLAKSELFIFFTSLMQKFTFKPPSDEKLTLNFRMGITLSPVKHRICAIPRA</sequence>
<evidence type="ECO:0000250" key="1"/>
<evidence type="ECO:0000305" key="2"/>
<accession>P52786</accession>